<dbReference type="EC" id="3.4.21.102"/>
<dbReference type="EMBL" id="X98341">
    <property type="protein sequence ID" value="CAA66987.1"/>
    <property type="molecule type" value="Genomic_DNA"/>
</dbReference>
<dbReference type="EMBL" id="AF015775">
    <property type="protein sequence ID" value="AAB72063.1"/>
    <property type="molecule type" value="Genomic_DNA"/>
</dbReference>
<dbReference type="EMBL" id="AF006665">
    <property type="protein sequence ID" value="AAB81168.1"/>
    <property type="molecule type" value="Genomic_DNA"/>
</dbReference>
<dbReference type="EMBL" id="AL009126">
    <property type="protein sequence ID" value="CAB13850.1"/>
    <property type="molecule type" value="Genomic_DNA"/>
</dbReference>
<dbReference type="PIR" id="B69610">
    <property type="entry name" value="B69610"/>
</dbReference>
<dbReference type="RefSeq" id="NP_389840.1">
    <property type="nucleotide sequence ID" value="NC_000964.3"/>
</dbReference>
<dbReference type="RefSeq" id="WP_003231186.1">
    <property type="nucleotide sequence ID" value="NZ_OZ025638.1"/>
</dbReference>
<dbReference type="SMR" id="O34666"/>
<dbReference type="FunCoup" id="O34666">
    <property type="interactions" value="482"/>
</dbReference>
<dbReference type="STRING" id="224308.BSU19590"/>
<dbReference type="MEROPS" id="S41.007"/>
<dbReference type="jPOST" id="O34666"/>
<dbReference type="PaxDb" id="224308-BSU19590"/>
<dbReference type="EnsemblBacteria" id="CAB13850">
    <property type="protein sequence ID" value="CAB13850"/>
    <property type="gene ID" value="BSU_19590"/>
</dbReference>
<dbReference type="GeneID" id="940115"/>
<dbReference type="KEGG" id="bsu:BSU19590"/>
<dbReference type="PATRIC" id="fig|224308.179.peg.2142"/>
<dbReference type="eggNOG" id="COG0793">
    <property type="taxonomic scope" value="Bacteria"/>
</dbReference>
<dbReference type="eggNOG" id="COG3409">
    <property type="taxonomic scope" value="Bacteria"/>
</dbReference>
<dbReference type="InParanoid" id="O34666"/>
<dbReference type="OrthoDB" id="9812068at2"/>
<dbReference type="PhylomeDB" id="O34666"/>
<dbReference type="BioCyc" id="BSUB:BSU19590-MONOMER"/>
<dbReference type="Proteomes" id="UP000001570">
    <property type="component" value="Chromosome"/>
</dbReference>
<dbReference type="GO" id="GO:0030288">
    <property type="term" value="C:outer membrane-bounded periplasmic space"/>
    <property type="evidence" value="ECO:0000318"/>
    <property type="project" value="GO_Central"/>
</dbReference>
<dbReference type="GO" id="GO:0004175">
    <property type="term" value="F:endopeptidase activity"/>
    <property type="evidence" value="ECO:0000318"/>
    <property type="project" value="GO_Central"/>
</dbReference>
<dbReference type="GO" id="GO:0004252">
    <property type="term" value="F:serine-type endopeptidase activity"/>
    <property type="evidence" value="ECO:0007669"/>
    <property type="project" value="UniProtKB-EC"/>
</dbReference>
<dbReference type="GO" id="GO:0006508">
    <property type="term" value="P:proteolysis"/>
    <property type="evidence" value="ECO:0007669"/>
    <property type="project" value="UniProtKB-KW"/>
</dbReference>
<dbReference type="GO" id="GO:0007165">
    <property type="term" value="P:signal transduction"/>
    <property type="evidence" value="ECO:0000318"/>
    <property type="project" value="GO_Central"/>
</dbReference>
<dbReference type="CDD" id="cd06782">
    <property type="entry name" value="cpPDZ_CPP-like"/>
    <property type="match status" value="1"/>
</dbReference>
<dbReference type="CDD" id="cd07560">
    <property type="entry name" value="Peptidase_S41_CPP"/>
    <property type="match status" value="1"/>
</dbReference>
<dbReference type="FunFam" id="3.90.226.10:FF:000023">
    <property type="entry name" value="Carboxyl-terminal processing protease"/>
    <property type="match status" value="1"/>
</dbReference>
<dbReference type="FunFam" id="2.30.42.10:FF:000063">
    <property type="entry name" value="Peptidase, S41 family"/>
    <property type="match status" value="1"/>
</dbReference>
<dbReference type="FunFam" id="3.30.750.44:FF:000001">
    <property type="entry name" value="S41 family peptidase"/>
    <property type="match status" value="1"/>
</dbReference>
<dbReference type="Gene3D" id="2.30.42.10">
    <property type="match status" value="1"/>
</dbReference>
<dbReference type="Gene3D" id="3.30.750.44">
    <property type="match status" value="1"/>
</dbReference>
<dbReference type="Gene3D" id="3.90.226.10">
    <property type="entry name" value="2-enoyl-CoA Hydratase, Chain A, domain 1"/>
    <property type="match status" value="1"/>
</dbReference>
<dbReference type="Gene3D" id="1.10.101.10">
    <property type="entry name" value="PGBD-like superfamily/PGBD"/>
    <property type="match status" value="1"/>
</dbReference>
<dbReference type="InterPro" id="IPR029045">
    <property type="entry name" value="ClpP/crotonase-like_dom_sf"/>
</dbReference>
<dbReference type="InterPro" id="IPR055210">
    <property type="entry name" value="CtpA/B_N"/>
</dbReference>
<dbReference type="InterPro" id="IPR001478">
    <property type="entry name" value="PDZ"/>
</dbReference>
<dbReference type="InterPro" id="IPR041489">
    <property type="entry name" value="PDZ_6"/>
</dbReference>
<dbReference type="InterPro" id="IPR036034">
    <property type="entry name" value="PDZ_sf"/>
</dbReference>
<dbReference type="InterPro" id="IPR004447">
    <property type="entry name" value="Peptidase_S41A"/>
</dbReference>
<dbReference type="InterPro" id="IPR002477">
    <property type="entry name" value="Peptidoglycan-bd-like"/>
</dbReference>
<dbReference type="InterPro" id="IPR036365">
    <property type="entry name" value="PGBD-like_sf"/>
</dbReference>
<dbReference type="InterPro" id="IPR036366">
    <property type="entry name" value="PGBDSf"/>
</dbReference>
<dbReference type="InterPro" id="IPR005151">
    <property type="entry name" value="Tail-specific_protease"/>
</dbReference>
<dbReference type="NCBIfam" id="TIGR00225">
    <property type="entry name" value="prc"/>
    <property type="match status" value="1"/>
</dbReference>
<dbReference type="PANTHER" id="PTHR32060:SF30">
    <property type="entry name" value="CARBOXY-TERMINAL PROCESSING PROTEASE CTPA"/>
    <property type="match status" value="1"/>
</dbReference>
<dbReference type="PANTHER" id="PTHR32060">
    <property type="entry name" value="TAIL-SPECIFIC PROTEASE"/>
    <property type="match status" value="1"/>
</dbReference>
<dbReference type="Pfam" id="PF22694">
    <property type="entry name" value="CtpB_N-like"/>
    <property type="match status" value="1"/>
</dbReference>
<dbReference type="Pfam" id="PF17820">
    <property type="entry name" value="PDZ_6"/>
    <property type="match status" value="1"/>
</dbReference>
<dbReference type="Pfam" id="PF03572">
    <property type="entry name" value="Peptidase_S41"/>
    <property type="match status" value="1"/>
</dbReference>
<dbReference type="Pfam" id="PF01471">
    <property type="entry name" value="PG_binding_1"/>
    <property type="match status" value="1"/>
</dbReference>
<dbReference type="SMART" id="SM00228">
    <property type="entry name" value="PDZ"/>
    <property type="match status" value="1"/>
</dbReference>
<dbReference type="SMART" id="SM00245">
    <property type="entry name" value="TSPc"/>
    <property type="match status" value="1"/>
</dbReference>
<dbReference type="SUPFAM" id="SSF52096">
    <property type="entry name" value="ClpP/crotonase"/>
    <property type="match status" value="1"/>
</dbReference>
<dbReference type="SUPFAM" id="SSF50156">
    <property type="entry name" value="PDZ domain-like"/>
    <property type="match status" value="1"/>
</dbReference>
<dbReference type="SUPFAM" id="SSF47090">
    <property type="entry name" value="PGBD-like"/>
    <property type="match status" value="1"/>
</dbReference>
<dbReference type="PROSITE" id="PS50106">
    <property type="entry name" value="PDZ"/>
    <property type="match status" value="1"/>
</dbReference>
<organism>
    <name type="scientific">Bacillus subtilis (strain 168)</name>
    <dbReference type="NCBI Taxonomy" id="224308"/>
    <lineage>
        <taxon>Bacteria</taxon>
        <taxon>Bacillati</taxon>
        <taxon>Bacillota</taxon>
        <taxon>Bacilli</taxon>
        <taxon>Bacillales</taxon>
        <taxon>Bacillaceae</taxon>
        <taxon>Bacillus</taxon>
    </lineage>
</organism>
<reference key="1">
    <citation type="journal article" date="1996" name="Gene">
        <title>A new Bacillus subtilis gene with homology to Escherichia coli prc.</title>
        <authorList>
            <person name="Marasco R."/>
            <person name="Varcamonti M."/>
            <person name="Ricca E."/>
            <person name="Sacco M."/>
        </authorList>
    </citation>
    <scope>NUCLEOTIDE SEQUENCE [GENOMIC DNA]</scope>
    <scope>INDUCTION</scope>
    <source>
        <strain>168 / PY17</strain>
    </source>
</reference>
<reference key="2">
    <citation type="journal article" date="1998" name="DNA Res.">
        <title>Sequence analysis of the Bacillus subtilis 168 chromosome region between the sspC and odhA loci (184 degrees-180 degrees).</title>
        <authorList>
            <person name="Ghim S.-Y."/>
            <person name="Choi S.-K."/>
            <person name="Shin B.-S."/>
            <person name="Jeong Y.-M."/>
            <person name="Sorokin A."/>
            <person name="Ehrlich S.D."/>
            <person name="Park S.-H."/>
        </authorList>
    </citation>
    <scope>NUCLEOTIDE SEQUENCE [GENOMIC DNA]</scope>
    <source>
        <strain>168</strain>
    </source>
</reference>
<reference key="3">
    <citation type="journal article" date="1997" name="Nature">
        <title>The complete genome sequence of the Gram-positive bacterium Bacillus subtilis.</title>
        <authorList>
            <person name="Kunst F."/>
            <person name="Ogasawara N."/>
            <person name="Moszer I."/>
            <person name="Albertini A.M."/>
            <person name="Alloni G."/>
            <person name="Azevedo V."/>
            <person name="Bertero M.G."/>
            <person name="Bessieres P."/>
            <person name="Bolotin A."/>
            <person name="Borchert S."/>
            <person name="Borriss R."/>
            <person name="Boursier L."/>
            <person name="Brans A."/>
            <person name="Braun M."/>
            <person name="Brignell S.C."/>
            <person name="Bron S."/>
            <person name="Brouillet S."/>
            <person name="Bruschi C.V."/>
            <person name="Caldwell B."/>
            <person name="Capuano V."/>
            <person name="Carter N.M."/>
            <person name="Choi S.-K."/>
            <person name="Codani J.-J."/>
            <person name="Connerton I.F."/>
            <person name="Cummings N.J."/>
            <person name="Daniel R.A."/>
            <person name="Denizot F."/>
            <person name="Devine K.M."/>
            <person name="Duesterhoeft A."/>
            <person name="Ehrlich S.D."/>
            <person name="Emmerson P.T."/>
            <person name="Entian K.-D."/>
            <person name="Errington J."/>
            <person name="Fabret C."/>
            <person name="Ferrari E."/>
            <person name="Foulger D."/>
            <person name="Fritz C."/>
            <person name="Fujita M."/>
            <person name="Fujita Y."/>
            <person name="Fuma S."/>
            <person name="Galizzi A."/>
            <person name="Galleron N."/>
            <person name="Ghim S.-Y."/>
            <person name="Glaser P."/>
            <person name="Goffeau A."/>
            <person name="Golightly E.J."/>
            <person name="Grandi G."/>
            <person name="Guiseppi G."/>
            <person name="Guy B.J."/>
            <person name="Haga K."/>
            <person name="Haiech J."/>
            <person name="Harwood C.R."/>
            <person name="Henaut A."/>
            <person name="Hilbert H."/>
            <person name="Holsappel S."/>
            <person name="Hosono S."/>
            <person name="Hullo M.-F."/>
            <person name="Itaya M."/>
            <person name="Jones L.-M."/>
            <person name="Joris B."/>
            <person name="Karamata D."/>
            <person name="Kasahara Y."/>
            <person name="Klaerr-Blanchard M."/>
            <person name="Klein C."/>
            <person name="Kobayashi Y."/>
            <person name="Koetter P."/>
            <person name="Koningstein G."/>
            <person name="Krogh S."/>
            <person name="Kumano M."/>
            <person name="Kurita K."/>
            <person name="Lapidus A."/>
            <person name="Lardinois S."/>
            <person name="Lauber J."/>
            <person name="Lazarevic V."/>
            <person name="Lee S.-M."/>
            <person name="Levine A."/>
            <person name="Liu H."/>
            <person name="Masuda S."/>
            <person name="Mauel C."/>
            <person name="Medigue C."/>
            <person name="Medina N."/>
            <person name="Mellado R.P."/>
            <person name="Mizuno M."/>
            <person name="Moestl D."/>
            <person name="Nakai S."/>
            <person name="Noback M."/>
            <person name="Noone D."/>
            <person name="O'Reilly M."/>
            <person name="Ogawa K."/>
            <person name="Ogiwara A."/>
            <person name="Oudega B."/>
            <person name="Park S.-H."/>
            <person name="Parro V."/>
            <person name="Pohl T.M."/>
            <person name="Portetelle D."/>
            <person name="Porwollik S."/>
            <person name="Prescott A.M."/>
            <person name="Presecan E."/>
            <person name="Pujic P."/>
            <person name="Purnelle B."/>
            <person name="Rapoport G."/>
            <person name="Rey M."/>
            <person name="Reynolds S."/>
            <person name="Rieger M."/>
            <person name="Rivolta C."/>
            <person name="Rocha E."/>
            <person name="Roche B."/>
            <person name="Rose M."/>
            <person name="Sadaie Y."/>
            <person name="Sato T."/>
            <person name="Scanlan E."/>
            <person name="Schleich S."/>
            <person name="Schroeter R."/>
            <person name="Scoffone F."/>
            <person name="Sekiguchi J."/>
            <person name="Sekowska A."/>
            <person name="Seror S.J."/>
            <person name="Serror P."/>
            <person name="Shin B.-S."/>
            <person name="Soldo B."/>
            <person name="Sorokin A."/>
            <person name="Tacconi E."/>
            <person name="Takagi T."/>
            <person name="Takahashi H."/>
            <person name="Takemaru K."/>
            <person name="Takeuchi M."/>
            <person name="Tamakoshi A."/>
            <person name="Tanaka T."/>
            <person name="Terpstra P."/>
            <person name="Tognoni A."/>
            <person name="Tosato V."/>
            <person name="Uchiyama S."/>
            <person name="Vandenbol M."/>
            <person name="Vannier F."/>
            <person name="Vassarotti A."/>
            <person name="Viari A."/>
            <person name="Wambutt R."/>
            <person name="Wedler E."/>
            <person name="Wedler H."/>
            <person name="Weitzenegger T."/>
            <person name="Winters P."/>
            <person name="Wipat A."/>
            <person name="Yamamoto H."/>
            <person name="Yamane K."/>
            <person name="Yasumoto K."/>
            <person name="Yata K."/>
            <person name="Yoshida K."/>
            <person name="Yoshikawa H.-F."/>
            <person name="Zumstein E."/>
            <person name="Yoshikawa H."/>
            <person name="Danchin A."/>
        </authorList>
    </citation>
    <scope>NUCLEOTIDE SEQUENCE [LARGE SCALE GENOMIC DNA]</scope>
    <source>
        <strain>168</strain>
    </source>
</reference>
<reference key="4">
    <citation type="journal article" date="2003" name="J. Bacteriol.">
        <title>A second PDZ-containing serine protease contributes to activation of the sporulation transcription factor sigmaK in Bacillus subtilis.</title>
        <authorList>
            <person name="Pan Q."/>
            <person name="Losick R."/>
            <person name="Rudner D.Z."/>
        </authorList>
    </citation>
    <scope>DISRUPTION PHENOTYPE</scope>
    <source>
        <strain>168 / PY79</strain>
    </source>
</reference>
<sequence>MKRQLKLFFIVLITAVVASALTLFITGNSSILGQKSASTGDSKFDKLNKAYEQIKSDYYQKTDDDKLVDGAIKGMIQSLDDPYSTYMDQEQAKSFDETISASFEGIGAQVEEKDGEILIVSPIKGSPAEKAGIKPRDQIIKVNGKSVKGMNVNEAVALIRGKKGTKVKLELNRAGVGNIDLSIKRDTIPVETVYSEMKDNNIGEIQITSFSETTAKELTDAIDSLEKKGAKGYILDLRGNPGGLMEQAITMSNLFIDKGKNIMQVEYKNGSKEVMKAEKERKVTKPTVVLVNDGTASAAEIMAAALHESSNVPLIGETTFGKGTVQTAKEYDDGSTVKLTVAKWLTADGEWIHKKGIKPQVKAELPDYAKLPYLDADKTYKSGDTGTNVKVAQKMLKALGYKVKVNSMYDQDFVSVVKQFQKKEKLNETGILTGDTTTKLMIELQKKLSDNDTQMEKAIETLKKEM</sequence>
<proteinExistence type="evidence at transcript level"/>
<comment type="catalytic activity">
    <reaction>
        <text>The enzyme shows specific recognition of a C-terminal tripeptide, Xaa-Yaa-Zaa, in which Xaa is preferably Ala or Leu, Yaa is preferably Ala or Tyr, and Zaa is preferably Ala, but then cleaves at a variable distance from the C-terminus. A typical cleavage is -Ala-Ala-|-Arg-Ala-Ala-Lys-Glu-Asn-Tyr-Ala-Leu-Ala-Ala.</text>
        <dbReference type="EC" id="3.4.21.102"/>
    </reaction>
</comment>
<comment type="induction">
    <text evidence="5">Is expressed only during vegetative growth.</text>
</comment>
<comment type="disruption phenotype">
    <text evidence="4">Sporulation is not significantly affected.</text>
</comment>
<comment type="similarity">
    <text evidence="6">Belongs to the peptidase S41A family.</text>
</comment>
<accession>O34666</accession>
<accession>Q45645</accession>
<accession>Q796B8</accession>
<feature type="signal peptide" evidence="2">
    <location>
        <begin position="1"/>
        <end position="36"/>
    </location>
</feature>
<feature type="chain" id="PRO_0000390776" description="Carboxy-terminal processing protease CtpA">
    <location>
        <begin position="37"/>
        <end position="466"/>
    </location>
</feature>
<feature type="domain" description="PDZ" evidence="3">
    <location>
        <begin position="96"/>
        <end position="174"/>
    </location>
</feature>
<feature type="active site" description="Charge relay system" evidence="1">
    <location>
        <position position="297"/>
    </location>
</feature>
<feature type="active site" description="Charge relay system" evidence="1">
    <location>
        <position position="308"/>
    </location>
</feature>
<feature type="active site" description="Charge relay system" evidence="1">
    <location>
        <position position="322"/>
    </location>
</feature>
<feature type="sequence conflict" description="In Ref. 1; CAA66987." evidence="6" ref="1">
    <original>AAEIMAAA</original>
    <variation>RSRNYGRC</variation>
    <location>
        <begin position="298"/>
        <end position="305"/>
    </location>
</feature>
<protein>
    <recommendedName>
        <fullName>Carboxy-terminal processing protease CtpA</fullName>
        <shortName>C-terminal processing protease</shortName>
        <ecNumber>3.4.21.102</ecNumber>
    </recommendedName>
</protein>
<evidence type="ECO:0000250" key="1"/>
<evidence type="ECO:0000255" key="2"/>
<evidence type="ECO:0000255" key="3">
    <source>
        <dbReference type="PROSITE-ProRule" id="PRU00143"/>
    </source>
</evidence>
<evidence type="ECO:0000269" key="4">
    <source>
    </source>
</evidence>
<evidence type="ECO:0000269" key="5">
    <source>
    </source>
</evidence>
<evidence type="ECO:0000305" key="6"/>
<name>CTPA_BACSU</name>
<keyword id="KW-0378">Hydrolase</keyword>
<keyword id="KW-0645">Protease</keyword>
<keyword id="KW-1185">Reference proteome</keyword>
<keyword id="KW-0720">Serine protease</keyword>
<keyword id="KW-0732">Signal</keyword>
<gene>
    <name type="primary">ctpA</name>
    <name type="synonym">orfRM1</name>
    <name type="ordered locus">BSU19590</name>
</gene>